<keyword id="KW-1003">Cell membrane</keyword>
<keyword id="KW-0472">Membrane</keyword>
<keyword id="KW-1185">Reference proteome</keyword>
<keyword id="KW-0812">Transmembrane</keyword>
<keyword id="KW-1133">Transmembrane helix</keyword>
<proteinExistence type="predicted"/>
<name>Y572_TREPA</name>
<protein>
    <recommendedName>
        <fullName>Uncharacterized protein TP_0572</fullName>
    </recommendedName>
</protein>
<comment type="subcellular location">
    <subcellularLocation>
        <location evidence="2">Cell membrane</location>
        <topology evidence="2">Multi-pass membrane protein</topology>
    </subcellularLocation>
</comment>
<accession>O83582</accession>
<sequence length="360" mass="38634">MSALFSLVAVYVLVCALHKQIKKYASVCYLGSACVSVAVVCVVWSGATKGNFGVRVLLHPLTSASFSTAIFTFVMCASVLKNGLLKQRVMGLRAELAITAAILTLGHNIAHGRDYLVRLCGSTGDLSTGFLVAGAVSMVLVLLMSILAVTSFKVVRRRMGAKTWKRVQRLAYLFYGLTYVHLSFILLPTALRGYIPSVVSYVLYTVIFATYALLRVRKALGKRKGACALCSAAVAVSFVAFVLGASHMVRHTRRAHTERTTRAKARKCSPAEMKDGVYEASAQGHNGKLSLRVTISQGRIEAVTVVGHSDDDPYASWAVEGVSAAIVGAQSTDVDVVSEATSTSEAIIRAVEKILQQPQP</sequence>
<organism>
    <name type="scientific">Treponema pallidum (strain Nichols)</name>
    <dbReference type="NCBI Taxonomy" id="243276"/>
    <lineage>
        <taxon>Bacteria</taxon>
        <taxon>Pseudomonadati</taxon>
        <taxon>Spirochaetota</taxon>
        <taxon>Spirochaetia</taxon>
        <taxon>Spirochaetales</taxon>
        <taxon>Treponemataceae</taxon>
        <taxon>Treponema</taxon>
    </lineage>
</organism>
<gene>
    <name type="ordered locus">TP_0572</name>
</gene>
<feature type="chain" id="PRO_0000202275" description="Uncharacterized protein TP_0572">
    <location>
        <begin position="1"/>
        <end position="360"/>
    </location>
</feature>
<feature type="transmembrane region" description="Helical" evidence="1">
    <location>
        <begin position="26"/>
        <end position="48"/>
    </location>
</feature>
<feature type="transmembrane region" description="Helical" evidence="1">
    <location>
        <begin position="58"/>
        <end position="80"/>
    </location>
</feature>
<feature type="transmembrane region" description="Helical" evidence="1">
    <location>
        <begin position="89"/>
        <end position="111"/>
    </location>
</feature>
<feature type="transmembrane region" description="Helical" evidence="1">
    <location>
        <begin position="126"/>
        <end position="148"/>
    </location>
</feature>
<feature type="transmembrane region" description="Helical" evidence="1">
    <location>
        <begin position="169"/>
        <end position="191"/>
    </location>
</feature>
<feature type="transmembrane region" description="Helical" evidence="1">
    <location>
        <begin position="195"/>
        <end position="214"/>
    </location>
</feature>
<feature type="transmembrane region" description="Helical" evidence="1">
    <location>
        <begin position="227"/>
        <end position="249"/>
    </location>
</feature>
<dbReference type="EMBL" id="AE000520">
    <property type="protein sequence ID" value="AAC65551.1"/>
    <property type="molecule type" value="Genomic_DNA"/>
</dbReference>
<dbReference type="PIR" id="B71309">
    <property type="entry name" value="B71309"/>
</dbReference>
<dbReference type="RefSeq" id="WP_010882019.1">
    <property type="nucleotide sequence ID" value="NC_021490.2"/>
</dbReference>
<dbReference type="SMR" id="O83582"/>
<dbReference type="STRING" id="243276.TP_0572"/>
<dbReference type="EnsemblBacteria" id="AAC65551">
    <property type="protein sequence ID" value="AAC65551"/>
    <property type="gene ID" value="TP_0572"/>
</dbReference>
<dbReference type="KEGG" id="tpa:TP_0572"/>
<dbReference type="KEGG" id="tpw:TPANIC_0572"/>
<dbReference type="eggNOG" id="COG2717">
    <property type="taxonomic scope" value="Bacteria"/>
</dbReference>
<dbReference type="eggNOG" id="COG3976">
    <property type="taxonomic scope" value="Bacteria"/>
</dbReference>
<dbReference type="HOGENOM" id="CLU_690609_0_0_12"/>
<dbReference type="OrthoDB" id="1098372at2"/>
<dbReference type="Proteomes" id="UP000000811">
    <property type="component" value="Chromosome"/>
</dbReference>
<dbReference type="GO" id="GO:0005886">
    <property type="term" value="C:plasma membrane"/>
    <property type="evidence" value="ECO:0007669"/>
    <property type="project" value="UniProtKB-SubCell"/>
</dbReference>
<dbReference type="GO" id="GO:0010181">
    <property type="term" value="F:FMN binding"/>
    <property type="evidence" value="ECO:0007669"/>
    <property type="project" value="InterPro"/>
</dbReference>
<dbReference type="Gene3D" id="3.90.1010.20">
    <property type="match status" value="1"/>
</dbReference>
<dbReference type="InterPro" id="IPR013130">
    <property type="entry name" value="Fe3_Rdtase_TM_dom"/>
</dbReference>
<dbReference type="InterPro" id="IPR007329">
    <property type="entry name" value="FMN-bd"/>
</dbReference>
<dbReference type="Pfam" id="PF01794">
    <property type="entry name" value="Ferric_reduct"/>
    <property type="match status" value="1"/>
</dbReference>
<dbReference type="Pfam" id="PF04205">
    <property type="entry name" value="FMN_bind"/>
    <property type="match status" value="1"/>
</dbReference>
<dbReference type="SMART" id="SM00900">
    <property type="entry name" value="FMN_bind"/>
    <property type="match status" value="1"/>
</dbReference>
<reference key="1">
    <citation type="journal article" date="1998" name="Science">
        <title>Complete genome sequence of Treponema pallidum, the syphilis spirochete.</title>
        <authorList>
            <person name="Fraser C.M."/>
            <person name="Norris S.J."/>
            <person name="Weinstock G.M."/>
            <person name="White O."/>
            <person name="Sutton G.G."/>
            <person name="Dodson R.J."/>
            <person name="Gwinn M.L."/>
            <person name="Hickey E.K."/>
            <person name="Clayton R.A."/>
            <person name="Ketchum K.A."/>
            <person name="Sodergren E."/>
            <person name="Hardham J.M."/>
            <person name="McLeod M.P."/>
            <person name="Salzberg S.L."/>
            <person name="Peterson J.D."/>
            <person name="Khalak H.G."/>
            <person name="Richardson D.L."/>
            <person name="Howell J.K."/>
            <person name="Chidambaram M."/>
            <person name="Utterback T.R."/>
            <person name="McDonald L.A."/>
            <person name="Artiach P."/>
            <person name="Bowman C."/>
            <person name="Cotton M.D."/>
            <person name="Fujii C."/>
            <person name="Garland S.A."/>
            <person name="Hatch B."/>
            <person name="Horst K."/>
            <person name="Roberts K.M."/>
            <person name="Sandusky M."/>
            <person name="Weidman J.F."/>
            <person name="Smith H.O."/>
            <person name="Venter J.C."/>
        </authorList>
    </citation>
    <scope>NUCLEOTIDE SEQUENCE [LARGE SCALE GENOMIC DNA]</scope>
    <source>
        <strain>Nichols</strain>
    </source>
</reference>
<evidence type="ECO:0000255" key="1"/>
<evidence type="ECO:0000305" key="2"/>